<name>HPRK_STRM5</name>
<dbReference type="EC" id="2.7.11.-" evidence="1"/>
<dbReference type="EC" id="2.7.4.-" evidence="1"/>
<dbReference type="EMBL" id="CP001111">
    <property type="protein sequence ID" value="ACF50656.1"/>
    <property type="molecule type" value="Genomic_DNA"/>
</dbReference>
<dbReference type="RefSeq" id="WP_004147299.1">
    <property type="nucleotide sequence ID" value="NC_011071.1"/>
</dbReference>
<dbReference type="SMR" id="B4SMH9"/>
<dbReference type="STRING" id="391008.Smal_0951"/>
<dbReference type="GeneID" id="97225550"/>
<dbReference type="KEGG" id="smt:Smal_0951"/>
<dbReference type="eggNOG" id="COG1493">
    <property type="taxonomic scope" value="Bacteria"/>
</dbReference>
<dbReference type="HOGENOM" id="CLU_052030_0_2_6"/>
<dbReference type="OrthoDB" id="9778803at2"/>
<dbReference type="Proteomes" id="UP000001867">
    <property type="component" value="Chromosome"/>
</dbReference>
<dbReference type="GO" id="GO:0005524">
    <property type="term" value="F:ATP binding"/>
    <property type="evidence" value="ECO:0007669"/>
    <property type="project" value="UniProtKB-UniRule"/>
</dbReference>
<dbReference type="GO" id="GO:0000287">
    <property type="term" value="F:magnesium ion binding"/>
    <property type="evidence" value="ECO:0007669"/>
    <property type="project" value="UniProtKB-UniRule"/>
</dbReference>
<dbReference type="GO" id="GO:0000155">
    <property type="term" value="F:phosphorelay sensor kinase activity"/>
    <property type="evidence" value="ECO:0007669"/>
    <property type="project" value="InterPro"/>
</dbReference>
<dbReference type="GO" id="GO:0004674">
    <property type="term" value="F:protein serine/threonine kinase activity"/>
    <property type="evidence" value="ECO:0007669"/>
    <property type="project" value="UniProtKB-KW"/>
</dbReference>
<dbReference type="GO" id="GO:0004712">
    <property type="term" value="F:protein serine/threonine/tyrosine kinase activity"/>
    <property type="evidence" value="ECO:0007669"/>
    <property type="project" value="UniProtKB-UniRule"/>
</dbReference>
<dbReference type="GO" id="GO:0006109">
    <property type="term" value="P:regulation of carbohydrate metabolic process"/>
    <property type="evidence" value="ECO:0007669"/>
    <property type="project" value="UniProtKB-UniRule"/>
</dbReference>
<dbReference type="CDD" id="cd01918">
    <property type="entry name" value="HprK_C"/>
    <property type="match status" value="1"/>
</dbReference>
<dbReference type="FunFam" id="3.40.50.300:FF:000174">
    <property type="entry name" value="HPr kinase/phosphorylase"/>
    <property type="match status" value="1"/>
</dbReference>
<dbReference type="Gene3D" id="3.40.1390.20">
    <property type="entry name" value="HprK N-terminal domain-like"/>
    <property type="match status" value="1"/>
</dbReference>
<dbReference type="Gene3D" id="3.40.50.300">
    <property type="entry name" value="P-loop containing nucleotide triphosphate hydrolases"/>
    <property type="match status" value="1"/>
</dbReference>
<dbReference type="HAMAP" id="MF_01249">
    <property type="entry name" value="HPr_kinase"/>
    <property type="match status" value="1"/>
</dbReference>
<dbReference type="InterPro" id="IPR003755">
    <property type="entry name" value="HPr(Ser)_kin/Pase"/>
</dbReference>
<dbReference type="InterPro" id="IPR011104">
    <property type="entry name" value="Hpr_kin/Pase_C"/>
</dbReference>
<dbReference type="InterPro" id="IPR011126">
    <property type="entry name" value="Hpr_kin/Pase_Hpr_N"/>
</dbReference>
<dbReference type="InterPro" id="IPR027417">
    <property type="entry name" value="P-loop_NTPase"/>
</dbReference>
<dbReference type="InterPro" id="IPR028979">
    <property type="entry name" value="Ser_kin/Pase_Hpr-like_N_sf"/>
</dbReference>
<dbReference type="NCBIfam" id="TIGR00679">
    <property type="entry name" value="hpr-ser"/>
    <property type="match status" value="1"/>
</dbReference>
<dbReference type="PANTHER" id="PTHR30305:SF1">
    <property type="entry name" value="HPR KINASE_PHOSPHORYLASE"/>
    <property type="match status" value="1"/>
</dbReference>
<dbReference type="PANTHER" id="PTHR30305">
    <property type="entry name" value="PROTEIN YJDM-RELATED"/>
    <property type="match status" value="1"/>
</dbReference>
<dbReference type="Pfam" id="PF07475">
    <property type="entry name" value="Hpr_kinase_C"/>
    <property type="match status" value="1"/>
</dbReference>
<dbReference type="Pfam" id="PF02603">
    <property type="entry name" value="Hpr_kinase_N"/>
    <property type="match status" value="1"/>
</dbReference>
<dbReference type="SUPFAM" id="SSF75138">
    <property type="entry name" value="HprK N-terminal domain-like"/>
    <property type="match status" value="1"/>
</dbReference>
<dbReference type="SUPFAM" id="SSF53795">
    <property type="entry name" value="PEP carboxykinase-like"/>
    <property type="match status" value="1"/>
</dbReference>
<sequence length="316" mass="35247">MNTSITARELFEQQRERLGLRWAAGKSGEKRELEAGNTVSRRPSLAGYLNAIYPNKVQILGTEELSWLDALEPRQRWETIEKIMQSHPLALVLTRNQPCPEDLRAAADESGTPLWLSPKRGHELLNHLSYHLARTLAPRVILHGVFMEIYSIGVLITGEAGSGKSELALELLSRGHRLVADDAPEFTQIAPDVLDGTCPELLQDLLEVRGLGVLNVREMFGDTAVKKNKYLRLIVHLTKPMTEPTPHGYERLTGDSGTRHVLDLDVPLITLPVMPGRNLAVLTEAATRLHILRTKGIDPAAMFIARHSNLLERRTP</sequence>
<organism>
    <name type="scientific">Stenotrophomonas maltophilia (strain R551-3)</name>
    <dbReference type="NCBI Taxonomy" id="391008"/>
    <lineage>
        <taxon>Bacteria</taxon>
        <taxon>Pseudomonadati</taxon>
        <taxon>Pseudomonadota</taxon>
        <taxon>Gammaproteobacteria</taxon>
        <taxon>Lysobacterales</taxon>
        <taxon>Lysobacteraceae</taxon>
        <taxon>Stenotrophomonas</taxon>
        <taxon>Stenotrophomonas maltophilia group</taxon>
    </lineage>
</organism>
<proteinExistence type="inferred from homology"/>
<reference key="1">
    <citation type="submission" date="2008-06" db="EMBL/GenBank/DDBJ databases">
        <title>Complete sequence of Stenotrophomonas maltophilia R551-3.</title>
        <authorList>
            <consortium name="US DOE Joint Genome Institute"/>
            <person name="Lucas S."/>
            <person name="Copeland A."/>
            <person name="Lapidus A."/>
            <person name="Glavina del Rio T."/>
            <person name="Dalin E."/>
            <person name="Tice H."/>
            <person name="Pitluck S."/>
            <person name="Chain P."/>
            <person name="Malfatti S."/>
            <person name="Shin M."/>
            <person name="Vergez L."/>
            <person name="Lang D."/>
            <person name="Schmutz J."/>
            <person name="Larimer F."/>
            <person name="Land M."/>
            <person name="Hauser L."/>
            <person name="Kyrpides N."/>
            <person name="Mikhailova N."/>
            <person name="Taghavi S."/>
            <person name="Monchy S."/>
            <person name="Newman L."/>
            <person name="Vangronsveld J."/>
            <person name="van der Lelie D."/>
            <person name="Richardson P."/>
        </authorList>
    </citation>
    <scope>NUCLEOTIDE SEQUENCE [LARGE SCALE GENOMIC DNA]</scope>
    <source>
        <strain>R551-3</strain>
    </source>
</reference>
<evidence type="ECO:0000255" key="1">
    <source>
        <dbReference type="HAMAP-Rule" id="MF_01249"/>
    </source>
</evidence>
<keyword id="KW-0067">ATP-binding</keyword>
<keyword id="KW-0418">Kinase</keyword>
<keyword id="KW-0460">Magnesium</keyword>
<keyword id="KW-0479">Metal-binding</keyword>
<keyword id="KW-0511">Multifunctional enzyme</keyword>
<keyword id="KW-0547">Nucleotide-binding</keyword>
<keyword id="KW-0723">Serine/threonine-protein kinase</keyword>
<keyword id="KW-0808">Transferase</keyword>
<gene>
    <name evidence="1" type="primary">hprK</name>
    <name type="ordered locus">Smal_0951</name>
</gene>
<protein>
    <recommendedName>
        <fullName evidence="1">HPr kinase/phosphorylase</fullName>
        <shortName evidence="1">HPrK/P</shortName>
        <ecNumber evidence="1">2.7.11.-</ecNumber>
        <ecNumber evidence="1">2.7.4.-</ecNumber>
    </recommendedName>
    <alternativeName>
        <fullName evidence="1">HPr(Ser) kinase/phosphorylase</fullName>
    </alternativeName>
</protein>
<accession>B4SMH9</accession>
<comment type="function">
    <text evidence="1">Catalyzes the ATP- as well as the pyrophosphate-dependent phosphorylation of a specific serine residue in HPr, a phosphocarrier protein of the phosphoenolpyruvate-dependent sugar phosphotransferase system (PTS). HprK/P also catalyzes the pyrophosphate-producing, inorganic phosphate-dependent dephosphorylation (phosphorolysis) of seryl-phosphorylated HPr (P-Ser-HPr).</text>
</comment>
<comment type="catalytic activity">
    <reaction evidence="1">
        <text>[HPr protein]-L-serine + ATP = [HPr protein]-O-phospho-L-serine + ADP + H(+)</text>
        <dbReference type="Rhea" id="RHEA:46600"/>
        <dbReference type="Rhea" id="RHEA-COMP:11602"/>
        <dbReference type="Rhea" id="RHEA-COMP:11603"/>
        <dbReference type="ChEBI" id="CHEBI:15378"/>
        <dbReference type="ChEBI" id="CHEBI:29999"/>
        <dbReference type="ChEBI" id="CHEBI:30616"/>
        <dbReference type="ChEBI" id="CHEBI:83421"/>
        <dbReference type="ChEBI" id="CHEBI:456216"/>
    </reaction>
</comment>
<comment type="catalytic activity">
    <reaction evidence="1">
        <text>[HPr protein]-O-phospho-L-serine + phosphate + H(+) = [HPr protein]-L-serine + diphosphate</text>
        <dbReference type="Rhea" id="RHEA:46604"/>
        <dbReference type="Rhea" id="RHEA-COMP:11602"/>
        <dbReference type="Rhea" id="RHEA-COMP:11603"/>
        <dbReference type="ChEBI" id="CHEBI:15378"/>
        <dbReference type="ChEBI" id="CHEBI:29999"/>
        <dbReference type="ChEBI" id="CHEBI:33019"/>
        <dbReference type="ChEBI" id="CHEBI:43474"/>
        <dbReference type="ChEBI" id="CHEBI:83421"/>
    </reaction>
</comment>
<comment type="cofactor">
    <cofactor evidence="1">
        <name>Mg(2+)</name>
        <dbReference type="ChEBI" id="CHEBI:18420"/>
    </cofactor>
</comment>
<comment type="subunit">
    <text evidence="1">Homohexamer.</text>
</comment>
<comment type="domain">
    <text evidence="1">The Walker A ATP-binding motif also binds Pi and PPi.</text>
</comment>
<comment type="miscellaneous">
    <text evidence="1">Both phosphorylation and phosphorolysis are carried out by the same active site and suggest a common mechanism for both reactions.</text>
</comment>
<comment type="similarity">
    <text evidence="1">Belongs to the HPrK/P family.</text>
</comment>
<feature type="chain" id="PRO_1000139911" description="HPr kinase/phosphorylase">
    <location>
        <begin position="1"/>
        <end position="316"/>
    </location>
</feature>
<feature type="region of interest" description="Important for the catalytic mechanism of both phosphorylation and dephosphorylation" evidence="1">
    <location>
        <begin position="206"/>
        <end position="215"/>
    </location>
</feature>
<feature type="region of interest" description="Important for the catalytic mechanism of dephosphorylation" evidence="1">
    <location>
        <begin position="272"/>
        <end position="277"/>
    </location>
</feature>
<feature type="active site" evidence="1">
    <location>
        <position position="143"/>
    </location>
</feature>
<feature type="active site" evidence="1">
    <location>
        <position position="164"/>
    </location>
</feature>
<feature type="active site" description="Proton acceptor; for phosphorylation activity. Proton donor; for dephosphorylation activity" evidence="1">
    <location>
        <position position="182"/>
    </location>
</feature>
<feature type="active site" evidence="1">
    <location>
        <position position="251"/>
    </location>
</feature>
<feature type="binding site" evidence="1">
    <location>
        <begin position="158"/>
        <end position="165"/>
    </location>
    <ligand>
        <name>ATP</name>
        <dbReference type="ChEBI" id="CHEBI:30616"/>
    </ligand>
</feature>
<feature type="binding site" evidence="1">
    <location>
        <position position="165"/>
    </location>
    <ligand>
        <name>Mg(2+)</name>
        <dbReference type="ChEBI" id="CHEBI:18420"/>
    </ligand>
</feature>
<feature type="binding site" evidence="1">
    <location>
        <position position="207"/>
    </location>
    <ligand>
        <name>Mg(2+)</name>
        <dbReference type="ChEBI" id="CHEBI:18420"/>
    </ligand>
</feature>